<gene>
    <name evidence="1" type="primary">hisB</name>
    <name type="ordered locus">AnaeK_0749</name>
</gene>
<evidence type="ECO:0000255" key="1">
    <source>
        <dbReference type="HAMAP-Rule" id="MF_00076"/>
    </source>
</evidence>
<evidence type="ECO:0000256" key="2">
    <source>
        <dbReference type="SAM" id="MobiDB-lite"/>
    </source>
</evidence>
<proteinExistence type="inferred from homology"/>
<protein>
    <recommendedName>
        <fullName evidence="1">Imidazoleglycerol-phosphate dehydratase</fullName>
        <shortName evidence="1">IGPD</shortName>
        <ecNumber evidence="1">4.2.1.19</ecNumber>
    </recommendedName>
</protein>
<feature type="chain" id="PRO_1000092669" description="Imidazoleglycerol-phosphate dehydratase">
    <location>
        <begin position="1"/>
        <end position="208"/>
    </location>
</feature>
<feature type="region of interest" description="Disordered" evidence="2">
    <location>
        <begin position="1"/>
        <end position="20"/>
    </location>
</feature>
<feature type="compositionally biased region" description="Low complexity" evidence="2">
    <location>
        <begin position="7"/>
        <end position="19"/>
    </location>
</feature>
<reference key="1">
    <citation type="submission" date="2008-08" db="EMBL/GenBank/DDBJ databases">
        <title>Complete sequence of Anaeromyxobacter sp. K.</title>
        <authorList>
            <consortium name="US DOE Joint Genome Institute"/>
            <person name="Lucas S."/>
            <person name="Copeland A."/>
            <person name="Lapidus A."/>
            <person name="Glavina del Rio T."/>
            <person name="Dalin E."/>
            <person name="Tice H."/>
            <person name="Bruce D."/>
            <person name="Goodwin L."/>
            <person name="Pitluck S."/>
            <person name="Saunders E."/>
            <person name="Brettin T."/>
            <person name="Detter J.C."/>
            <person name="Han C."/>
            <person name="Larimer F."/>
            <person name="Land M."/>
            <person name="Hauser L."/>
            <person name="Kyrpides N."/>
            <person name="Ovchinnikiva G."/>
            <person name="Beliaev A."/>
        </authorList>
    </citation>
    <scope>NUCLEOTIDE SEQUENCE [LARGE SCALE GENOMIC DNA]</scope>
    <source>
        <strain>K</strain>
    </source>
</reference>
<dbReference type="EC" id="4.2.1.19" evidence="1"/>
<dbReference type="EMBL" id="CP001131">
    <property type="protein sequence ID" value="ACG71988.1"/>
    <property type="molecule type" value="Genomic_DNA"/>
</dbReference>
<dbReference type="RefSeq" id="WP_012524816.1">
    <property type="nucleotide sequence ID" value="NC_011145.1"/>
</dbReference>
<dbReference type="SMR" id="B4UDJ7"/>
<dbReference type="KEGG" id="ank:AnaeK_0749"/>
<dbReference type="HOGENOM" id="CLU_044308_3_0_7"/>
<dbReference type="OrthoDB" id="9790411at2"/>
<dbReference type="UniPathway" id="UPA00031">
    <property type="reaction ID" value="UER00011"/>
</dbReference>
<dbReference type="Proteomes" id="UP000001871">
    <property type="component" value="Chromosome"/>
</dbReference>
<dbReference type="GO" id="GO:0005737">
    <property type="term" value="C:cytoplasm"/>
    <property type="evidence" value="ECO:0007669"/>
    <property type="project" value="UniProtKB-SubCell"/>
</dbReference>
<dbReference type="GO" id="GO:0004424">
    <property type="term" value="F:imidazoleglycerol-phosphate dehydratase activity"/>
    <property type="evidence" value="ECO:0007669"/>
    <property type="project" value="UniProtKB-UniRule"/>
</dbReference>
<dbReference type="GO" id="GO:0000105">
    <property type="term" value="P:L-histidine biosynthetic process"/>
    <property type="evidence" value="ECO:0007669"/>
    <property type="project" value="UniProtKB-UniRule"/>
</dbReference>
<dbReference type="CDD" id="cd07914">
    <property type="entry name" value="IGPD"/>
    <property type="match status" value="1"/>
</dbReference>
<dbReference type="FunFam" id="3.30.230.40:FF:000001">
    <property type="entry name" value="Imidazoleglycerol-phosphate dehydratase HisB"/>
    <property type="match status" value="1"/>
</dbReference>
<dbReference type="FunFam" id="3.30.230.40:FF:000003">
    <property type="entry name" value="Imidazoleglycerol-phosphate dehydratase HisB"/>
    <property type="match status" value="1"/>
</dbReference>
<dbReference type="Gene3D" id="3.30.230.40">
    <property type="entry name" value="Imidazole glycerol phosphate dehydratase, domain 1"/>
    <property type="match status" value="2"/>
</dbReference>
<dbReference type="HAMAP" id="MF_00076">
    <property type="entry name" value="HisB"/>
    <property type="match status" value="1"/>
</dbReference>
<dbReference type="InterPro" id="IPR038494">
    <property type="entry name" value="IGPD_sf"/>
</dbReference>
<dbReference type="InterPro" id="IPR000807">
    <property type="entry name" value="ImidazoleglycerolP_deHydtase"/>
</dbReference>
<dbReference type="InterPro" id="IPR020565">
    <property type="entry name" value="ImidazoleglycerP_deHydtase_CS"/>
</dbReference>
<dbReference type="InterPro" id="IPR020568">
    <property type="entry name" value="Ribosomal_Su5_D2-typ_SF"/>
</dbReference>
<dbReference type="NCBIfam" id="NF002111">
    <property type="entry name" value="PRK00951.2-1"/>
    <property type="match status" value="1"/>
</dbReference>
<dbReference type="NCBIfam" id="NF002114">
    <property type="entry name" value="PRK00951.2-4"/>
    <property type="match status" value="1"/>
</dbReference>
<dbReference type="PANTHER" id="PTHR23133:SF2">
    <property type="entry name" value="IMIDAZOLEGLYCEROL-PHOSPHATE DEHYDRATASE"/>
    <property type="match status" value="1"/>
</dbReference>
<dbReference type="PANTHER" id="PTHR23133">
    <property type="entry name" value="IMIDAZOLEGLYCEROL-PHOSPHATE DEHYDRATASE HIS7"/>
    <property type="match status" value="1"/>
</dbReference>
<dbReference type="Pfam" id="PF00475">
    <property type="entry name" value="IGPD"/>
    <property type="match status" value="1"/>
</dbReference>
<dbReference type="SUPFAM" id="SSF54211">
    <property type="entry name" value="Ribosomal protein S5 domain 2-like"/>
    <property type="match status" value="2"/>
</dbReference>
<dbReference type="PROSITE" id="PS00955">
    <property type="entry name" value="IGP_DEHYDRATASE_2"/>
    <property type="match status" value="1"/>
</dbReference>
<accession>B4UDJ7</accession>
<sequence>MSRRATVKAPRAGAAARRGAVARRTKETDVAVELRLEPGEAAISTGLPFFDHMLDQISRHGGMALTVRAKGDLQVDAHHTVEDVGIGLGEALRQALEDKAGLARYGHAVVPLDEALVEAVVDLSGRPHLTFNAKLPSGKKFIGGYDVDLTQDFLQALVNHARICVHVNVRYGRNLHHVVEAIFKATARALRAATAREGTALPSTKGTL</sequence>
<name>HIS7_ANASK</name>
<organism>
    <name type="scientific">Anaeromyxobacter sp. (strain K)</name>
    <dbReference type="NCBI Taxonomy" id="447217"/>
    <lineage>
        <taxon>Bacteria</taxon>
        <taxon>Pseudomonadati</taxon>
        <taxon>Myxococcota</taxon>
        <taxon>Myxococcia</taxon>
        <taxon>Myxococcales</taxon>
        <taxon>Cystobacterineae</taxon>
        <taxon>Anaeromyxobacteraceae</taxon>
        <taxon>Anaeromyxobacter</taxon>
    </lineage>
</organism>
<keyword id="KW-0028">Amino-acid biosynthesis</keyword>
<keyword id="KW-0963">Cytoplasm</keyword>
<keyword id="KW-0368">Histidine biosynthesis</keyword>
<keyword id="KW-0456">Lyase</keyword>
<comment type="catalytic activity">
    <reaction evidence="1">
        <text>D-erythro-1-(imidazol-4-yl)glycerol 3-phosphate = 3-(imidazol-4-yl)-2-oxopropyl phosphate + H2O</text>
        <dbReference type="Rhea" id="RHEA:11040"/>
        <dbReference type="ChEBI" id="CHEBI:15377"/>
        <dbReference type="ChEBI" id="CHEBI:57766"/>
        <dbReference type="ChEBI" id="CHEBI:58278"/>
        <dbReference type="EC" id="4.2.1.19"/>
    </reaction>
</comment>
<comment type="pathway">
    <text evidence="1">Amino-acid biosynthesis; L-histidine biosynthesis; L-histidine from 5-phospho-alpha-D-ribose 1-diphosphate: step 6/9.</text>
</comment>
<comment type="subcellular location">
    <subcellularLocation>
        <location evidence="1">Cytoplasm</location>
    </subcellularLocation>
</comment>
<comment type="similarity">
    <text evidence="1">Belongs to the imidazoleglycerol-phosphate dehydratase family.</text>
</comment>